<sequence length="137" mass="15281">MRILGLDLGKKTIGVAISDPLGFTAQGITTIRRANKEKDMEELRKICDEYKVETIVIGLPKNMNGTIGPSGEIAMEMGKLVEEALNIKVEFWDERLTTVAAHKAMLEADLSRSKRKKIVDKVASTYILQGYLDRISK</sequence>
<evidence type="ECO:0000255" key="1">
    <source>
        <dbReference type="HAMAP-Rule" id="MF_00651"/>
    </source>
</evidence>
<comment type="function">
    <text evidence="1">Could be a nuclease involved in processing of the 5'-end of pre-16S rRNA.</text>
</comment>
<comment type="subcellular location">
    <subcellularLocation>
        <location evidence="1">Cytoplasm</location>
    </subcellularLocation>
</comment>
<comment type="similarity">
    <text evidence="1">Belongs to the YqgF nuclease family.</text>
</comment>
<name>YQGF_CLOBA</name>
<accession>B2V3W4</accession>
<reference key="1">
    <citation type="submission" date="2008-05" db="EMBL/GenBank/DDBJ databases">
        <title>Complete genome sequence of Clostridium botulinum E3 str. Alaska E43.</title>
        <authorList>
            <person name="Brinkac L.M."/>
            <person name="Brown J.L."/>
            <person name="Bruce D."/>
            <person name="Detter C."/>
            <person name="Munk C."/>
            <person name="Smith L.A."/>
            <person name="Smith T.J."/>
            <person name="Sutton G."/>
            <person name="Brettin T.S."/>
        </authorList>
    </citation>
    <scope>NUCLEOTIDE SEQUENCE [LARGE SCALE GENOMIC DNA]</scope>
    <source>
        <strain>Alaska E43 / Type E3</strain>
    </source>
</reference>
<feature type="chain" id="PRO_1000131013" description="Putative pre-16S rRNA nuclease">
    <location>
        <begin position="1"/>
        <end position="137"/>
    </location>
</feature>
<gene>
    <name type="ordered locus">CLH_1127</name>
</gene>
<dbReference type="EC" id="3.1.-.-" evidence="1"/>
<dbReference type="EMBL" id="CP001078">
    <property type="protein sequence ID" value="ACD51203.1"/>
    <property type="molecule type" value="Genomic_DNA"/>
</dbReference>
<dbReference type="SMR" id="B2V3W4"/>
<dbReference type="KEGG" id="cbt:CLH_1127"/>
<dbReference type="HOGENOM" id="CLU_098240_2_0_9"/>
<dbReference type="GO" id="GO:0005829">
    <property type="term" value="C:cytosol"/>
    <property type="evidence" value="ECO:0007669"/>
    <property type="project" value="TreeGrafter"/>
</dbReference>
<dbReference type="GO" id="GO:0004518">
    <property type="term" value="F:nuclease activity"/>
    <property type="evidence" value="ECO:0007669"/>
    <property type="project" value="UniProtKB-KW"/>
</dbReference>
<dbReference type="GO" id="GO:0000967">
    <property type="term" value="P:rRNA 5'-end processing"/>
    <property type="evidence" value="ECO:0007669"/>
    <property type="project" value="UniProtKB-UniRule"/>
</dbReference>
<dbReference type="CDD" id="cd16964">
    <property type="entry name" value="YqgF"/>
    <property type="match status" value="1"/>
</dbReference>
<dbReference type="Gene3D" id="3.30.420.140">
    <property type="entry name" value="YqgF/RNase H-like domain"/>
    <property type="match status" value="1"/>
</dbReference>
<dbReference type="HAMAP" id="MF_00651">
    <property type="entry name" value="Nuclease_YqgF"/>
    <property type="match status" value="1"/>
</dbReference>
<dbReference type="InterPro" id="IPR012337">
    <property type="entry name" value="RNaseH-like_sf"/>
</dbReference>
<dbReference type="InterPro" id="IPR005227">
    <property type="entry name" value="YqgF"/>
</dbReference>
<dbReference type="InterPro" id="IPR006641">
    <property type="entry name" value="YqgF/RNaseH-like_dom"/>
</dbReference>
<dbReference type="InterPro" id="IPR037027">
    <property type="entry name" value="YqgF/RNaseH-like_dom_sf"/>
</dbReference>
<dbReference type="NCBIfam" id="TIGR00250">
    <property type="entry name" value="RNAse_H_YqgF"/>
    <property type="match status" value="1"/>
</dbReference>
<dbReference type="PANTHER" id="PTHR33317">
    <property type="entry name" value="POLYNUCLEOTIDYL TRANSFERASE, RIBONUCLEASE H-LIKE SUPERFAMILY PROTEIN"/>
    <property type="match status" value="1"/>
</dbReference>
<dbReference type="PANTHER" id="PTHR33317:SF4">
    <property type="entry name" value="POLYNUCLEOTIDYL TRANSFERASE, RIBONUCLEASE H-LIKE SUPERFAMILY PROTEIN"/>
    <property type="match status" value="1"/>
</dbReference>
<dbReference type="Pfam" id="PF03652">
    <property type="entry name" value="RuvX"/>
    <property type="match status" value="1"/>
</dbReference>
<dbReference type="SMART" id="SM00732">
    <property type="entry name" value="YqgFc"/>
    <property type="match status" value="1"/>
</dbReference>
<dbReference type="SUPFAM" id="SSF53098">
    <property type="entry name" value="Ribonuclease H-like"/>
    <property type="match status" value="1"/>
</dbReference>
<protein>
    <recommendedName>
        <fullName evidence="1">Putative pre-16S rRNA nuclease</fullName>
        <ecNumber evidence="1">3.1.-.-</ecNumber>
    </recommendedName>
</protein>
<keyword id="KW-0963">Cytoplasm</keyword>
<keyword id="KW-0378">Hydrolase</keyword>
<keyword id="KW-0540">Nuclease</keyword>
<keyword id="KW-0690">Ribosome biogenesis</keyword>
<proteinExistence type="inferred from homology"/>
<organism>
    <name type="scientific">Clostridium botulinum (strain Alaska E43 / Type E3)</name>
    <dbReference type="NCBI Taxonomy" id="508767"/>
    <lineage>
        <taxon>Bacteria</taxon>
        <taxon>Bacillati</taxon>
        <taxon>Bacillota</taxon>
        <taxon>Clostridia</taxon>
        <taxon>Eubacteriales</taxon>
        <taxon>Clostridiaceae</taxon>
        <taxon>Clostridium</taxon>
    </lineage>
</organism>